<dbReference type="EC" id="5.4.2.12" evidence="1"/>
<dbReference type="EMBL" id="AE016825">
    <property type="protein sequence ID" value="AAQ61016.1"/>
    <property type="molecule type" value="Genomic_DNA"/>
</dbReference>
<dbReference type="RefSeq" id="WP_011136899.1">
    <property type="nucleotide sequence ID" value="NC_005085.1"/>
</dbReference>
<dbReference type="SMR" id="Q7NSR8"/>
<dbReference type="STRING" id="243365.CV_3352"/>
<dbReference type="KEGG" id="cvi:CV_3352"/>
<dbReference type="eggNOG" id="COG0696">
    <property type="taxonomic scope" value="Bacteria"/>
</dbReference>
<dbReference type="HOGENOM" id="CLU_026099_2_0_4"/>
<dbReference type="OrthoDB" id="9800863at2"/>
<dbReference type="UniPathway" id="UPA00109">
    <property type="reaction ID" value="UER00186"/>
</dbReference>
<dbReference type="Proteomes" id="UP000001424">
    <property type="component" value="Chromosome"/>
</dbReference>
<dbReference type="GO" id="GO:0005829">
    <property type="term" value="C:cytosol"/>
    <property type="evidence" value="ECO:0007669"/>
    <property type="project" value="TreeGrafter"/>
</dbReference>
<dbReference type="GO" id="GO:0030145">
    <property type="term" value="F:manganese ion binding"/>
    <property type="evidence" value="ECO:0007669"/>
    <property type="project" value="UniProtKB-UniRule"/>
</dbReference>
<dbReference type="GO" id="GO:0004619">
    <property type="term" value="F:phosphoglycerate mutase activity"/>
    <property type="evidence" value="ECO:0007669"/>
    <property type="project" value="UniProtKB-EC"/>
</dbReference>
<dbReference type="GO" id="GO:0006007">
    <property type="term" value="P:glucose catabolic process"/>
    <property type="evidence" value="ECO:0007669"/>
    <property type="project" value="InterPro"/>
</dbReference>
<dbReference type="GO" id="GO:0006096">
    <property type="term" value="P:glycolytic process"/>
    <property type="evidence" value="ECO:0007669"/>
    <property type="project" value="UniProtKB-UniRule"/>
</dbReference>
<dbReference type="CDD" id="cd16010">
    <property type="entry name" value="iPGM"/>
    <property type="match status" value="1"/>
</dbReference>
<dbReference type="FunFam" id="3.40.1450.10:FF:000002">
    <property type="entry name" value="2,3-bisphosphoglycerate-independent phosphoglycerate mutase"/>
    <property type="match status" value="1"/>
</dbReference>
<dbReference type="Gene3D" id="3.40.720.10">
    <property type="entry name" value="Alkaline Phosphatase, subunit A"/>
    <property type="match status" value="1"/>
</dbReference>
<dbReference type="Gene3D" id="3.40.1450.10">
    <property type="entry name" value="BPG-independent phosphoglycerate mutase, domain B"/>
    <property type="match status" value="1"/>
</dbReference>
<dbReference type="HAMAP" id="MF_01038">
    <property type="entry name" value="GpmI"/>
    <property type="match status" value="1"/>
</dbReference>
<dbReference type="InterPro" id="IPR017850">
    <property type="entry name" value="Alkaline_phosphatase_core_sf"/>
</dbReference>
<dbReference type="InterPro" id="IPR011258">
    <property type="entry name" value="BPG-indep_PGM_N"/>
</dbReference>
<dbReference type="InterPro" id="IPR006124">
    <property type="entry name" value="Metalloenzyme"/>
</dbReference>
<dbReference type="InterPro" id="IPR036646">
    <property type="entry name" value="PGAM_B_sf"/>
</dbReference>
<dbReference type="InterPro" id="IPR005995">
    <property type="entry name" value="Pgm_bpd_ind"/>
</dbReference>
<dbReference type="NCBIfam" id="TIGR01307">
    <property type="entry name" value="pgm_bpd_ind"/>
    <property type="match status" value="1"/>
</dbReference>
<dbReference type="PANTHER" id="PTHR31637">
    <property type="entry name" value="2,3-BISPHOSPHOGLYCERATE-INDEPENDENT PHOSPHOGLYCERATE MUTASE"/>
    <property type="match status" value="1"/>
</dbReference>
<dbReference type="PANTHER" id="PTHR31637:SF0">
    <property type="entry name" value="2,3-BISPHOSPHOGLYCERATE-INDEPENDENT PHOSPHOGLYCERATE MUTASE"/>
    <property type="match status" value="1"/>
</dbReference>
<dbReference type="Pfam" id="PF06415">
    <property type="entry name" value="iPGM_N"/>
    <property type="match status" value="1"/>
</dbReference>
<dbReference type="Pfam" id="PF01676">
    <property type="entry name" value="Metalloenzyme"/>
    <property type="match status" value="1"/>
</dbReference>
<dbReference type="PIRSF" id="PIRSF001492">
    <property type="entry name" value="IPGAM"/>
    <property type="match status" value="1"/>
</dbReference>
<dbReference type="SUPFAM" id="SSF64158">
    <property type="entry name" value="2,3-Bisphosphoglycerate-independent phosphoglycerate mutase, substrate-binding domain"/>
    <property type="match status" value="1"/>
</dbReference>
<dbReference type="SUPFAM" id="SSF53649">
    <property type="entry name" value="Alkaline phosphatase-like"/>
    <property type="match status" value="1"/>
</dbReference>
<sequence length="507" mass="55525">MKSIKPVLLLILDGFGHRTEGDDNAILHARMPVWSRLREQYAYGTINASENFVGLPSGQFGNSEVGHLNIGAGRIVQQDISRIDCDIEDGRFSSNDTLQQAMSKAQGSALHILGLLSDGGVHSHENHIHALIRAAQAAGVPKIYVHAFLDGRDTPPRSAETYLKRLDAALAECPNARLVSVTGRYWAMDRDKRWERVEPAYRLLVDGEGLFHAETGLDALKAAYERDENDEFVKATGIGAPVKMQDGDALIFMNFRADRARQLTSALTDPAFDGFKARQPKFGYYATLTSYGEAYSALPVAYAPQKIHNGMGEYLSSKGLKQLRIAETEKYPHVTYFFNGGEEQVYPGEDRILVPSPKVATYDLQPEMSAGEVTDKIVAAIQSGQYQAIFCNYANGDMVGHSGVFDAAVKAVEALDGCIERCVDAMLAAGGEVLITADHGNCEQMYDGEHHQPHTQHTTNQVPFLYIGRPAKIRAGGSLRDISPSLLAMMGLEQPAEMTGQSLIDFQ</sequence>
<protein>
    <recommendedName>
        <fullName evidence="1">2,3-bisphosphoglycerate-independent phosphoglycerate mutase</fullName>
        <shortName evidence="1">BPG-independent PGAM</shortName>
        <shortName evidence="1">Phosphoglyceromutase</shortName>
        <shortName evidence="1">iPGM</shortName>
        <ecNumber evidence="1">5.4.2.12</ecNumber>
    </recommendedName>
</protein>
<feature type="chain" id="PRO_0000212135" description="2,3-bisphosphoglycerate-independent phosphoglycerate mutase">
    <location>
        <begin position="1"/>
        <end position="507"/>
    </location>
</feature>
<feature type="active site" description="Phosphoserine intermediate" evidence="1">
    <location>
        <position position="63"/>
    </location>
</feature>
<feature type="binding site" evidence="1">
    <location>
        <position position="13"/>
    </location>
    <ligand>
        <name>Mn(2+)</name>
        <dbReference type="ChEBI" id="CHEBI:29035"/>
        <label>2</label>
    </ligand>
</feature>
<feature type="binding site" evidence="1">
    <location>
        <position position="63"/>
    </location>
    <ligand>
        <name>Mn(2+)</name>
        <dbReference type="ChEBI" id="CHEBI:29035"/>
        <label>2</label>
    </ligand>
</feature>
<feature type="binding site" evidence="1">
    <location>
        <position position="122"/>
    </location>
    <ligand>
        <name>substrate</name>
    </ligand>
</feature>
<feature type="binding site" evidence="1">
    <location>
        <begin position="152"/>
        <end position="153"/>
    </location>
    <ligand>
        <name>substrate</name>
    </ligand>
</feature>
<feature type="binding site" evidence="1">
    <location>
        <position position="184"/>
    </location>
    <ligand>
        <name>substrate</name>
    </ligand>
</feature>
<feature type="binding site" evidence="1">
    <location>
        <position position="190"/>
    </location>
    <ligand>
        <name>substrate</name>
    </ligand>
</feature>
<feature type="binding site" evidence="1">
    <location>
        <begin position="256"/>
        <end position="259"/>
    </location>
    <ligand>
        <name>substrate</name>
    </ligand>
</feature>
<feature type="binding site" evidence="1">
    <location>
        <position position="330"/>
    </location>
    <ligand>
        <name>substrate</name>
    </ligand>
</feature>
<feature type="binding site" evidence="1">
    <location>
        <position position="397"/>
    </location>
    <ligand>
        <name>Mn(2+)</name>
        <dbReference type="ChEBI" id="CHEBI:29035"/>
        <label>1</label>
    </ligand>
</feature>
<feature type="binding site" evidence="1">
    <location>
        <position position="401"/>
    </location>
    <ligand>
        <name>Mn(2+)</name>
        <dbReference type="ChEBI" id="CHEBI:29035"/>
        <label>1</label>
    </ligand>
</feature>
<feature type="binding site" evidence="1">
    <location>
        <position position="438"/>
    </location>
    <ligand>
        <name>Mn(2+)</name>
        <dbReference type="ChEBI" id="CHEBI:29035"/>
        <label>2</label>
    </ligand>
</feature>
<feature type="binding site" evidence="1">
    <location>
        <position position="439"/>
    </location>
    <ligand>
        <name>Mn(2+)</name>
        <dbReference type="ChEBI" id="CHEBI:29035"/>
        <label>2</label>
    </ligand>
</feature>
<feature type="binding site" evidence="1">
    <location>
        <position position="457"/>
    </location>
    <ligand>
        <name>Mn(2+)</name>
        <dbReference type="ChEBI" id="CHEBI:29035"/>
        <label>1</label>
    </ligand>
</feature>
<evidence type="ECO:0000255" key="1">
    <source>
        <dbReference type="HAMAP-Rule" id="MF_01038"/>
    </source>
</evidence>
<accession>Q7NSR8</accession>
<gene>
    <name evidence="1" type="primary">gpmI</name>
    <name type="synonym">pgm</name>
    <name type="ordered locus">CV_3352</name>
</gene>
<proteinExistence type="inferred from homology"/>
<organism>
    <name type="scientific">Chromobacterium violaceum (strain ATCC 12472 / DSM 30191 / JCM 1249 / CCUG 213 / NBRC 12614 / NCIMB 9131 / NCTC 9757 / MK)</name>
    <dbReference type="NCBI Taxonomy" id="243365"/>
    <lineage>
        <taxon>Bacteria</taxon>
        <taxon>Pseudomonadati</taxon>
        <taxon>Pseudomonadota</taxon>
        <taxon>Betaproteobacteria</taxon>
        <taxon>Neisseriales</taxon>
        <taxon>Chromobacteriaceae</taxon>
        <taxon>Chromobacterium</taxon>
    </lineage>
</organism>
<keyword id="KW-0324">Glycolysis</keyword>
<keyword id="KW-0413">Isomerase</keyword>
<keyword id="KW-0464">Manganese</keyword>
<keyword id="KW-0479">Metal-binding</keyword>
<keyword id="KW-1185">Reference proteome</keyword>
<name>GPMI_CHRVO</name>
<reference key="1">
    <citation type="journal article" date="2003" name="Proc. Natl. Acad. Sci. U.S.A.">
        <title>The complete genome sequence of Chromobacterium violaceum reveals remarkable and exploitable bacterial adaptability.</title>
        <authorList>
            <person name="Vasconcelos A.T.R."/>
            <person name="de Almeida D.F."/>
            <person name="Hungria M."/>
            <person name="Guimaraes C.T."/>
            <person name="Antonio R.V."/>
            <person name="Almeida F.C."/>
            <person name="de Almeida L.G.P."/>
            <person name="de Almeida R."/>
            <person name="Alves-Gomes J.A."/>
            <person name="Andrade E.M."/>
            <person name="Araripe J."/>
            <person name="de Araujo M.F.F."/>
            <person name="Astolfi-Filho S."/>
            <person name="Azevedo V."/>
            <person name="Baptista A.J."/>
            <person name="Bataus L.A.M."/>
            <person name="Batista J.S."/>
            <person name="Belo A."/>
            <person name="van den Berg C."/>
            <person name="Bogo M."/>
            <person name="Bonatto S."/>
            <person name="Bordignon J."/>
            <person name="Brigido M.M."/>
            <person name="Brito C.A."/>
            <person name="Brocchi M."/>
            <person name="Burity H.A."/>
            <person name="Camargo A.A."/>
            <person name="Cardoso D.D.P."/>
            <person name="Carneiro N.P."/>
            <person name="Carraro D.M."/>
            <person name="Carvalho C.M.B."/>
            <person name="Cascardo J.C.M."/>
            <person name="Cavada B.S."/>
            <person name="Chueire L.M.O."/>
            <person name="Creczynski-Pasa T.B."/>
            <person name="Cunha-Junior N.C."/>
            <person name="Fagundes N."/>
            <person name="Falcao C.L."/>
            <person name="Fantinatti F."/>
            <person name="Farias I.P."/>
            <person name="Felipe M.S.S."/>
            <person name="Ferrari L.P."/>
            <person name="Ferro J.A."/>
            <person name="Ferro M.I.T."/>
            <person name="Franco G.R."/>
            <person name="Freitas N.S.A."/>
            <person name="Furlan L.R."/>
            <person name="Gazzinelli R.T."/>
            <person name="Gomes E.A."/>
            <person name="Goncalves P.R."/>
            <person name="Grangeiro T.B."/>
            <person name="Grattapaglia D."/>
            <person name="Grisard E.C."/>
            <person name="Hanna E.S."/>
            <person name="Jardim S.N."/>
            <person name="Laurino J."/>
            <person name="Leoi L.C.T."/>
            <person name="Lima L.F.A."/>
            <person name="Loureiro M.F."/>
            <person name="Lyra M.C.C.P."/>
            <person name="Madeira H.M.F."/>
            <person name="Manfio G.P."/>
            <person name="Maranhao A.Q."/>
            <person name="Martins W.S."/>
            <person name="di Mauro S.M.Z."/>
            <person name="de Medeiros S.R.B."/>
            <person name="Meissner R.V."/>
            <person name="Moreira M.A.M."/>
            <person name="Nascimento F.F."/>
            <person name="Nicolas M.F."/>
            <person name="Oliveira J.G."/>
            <person name="Oliveira S.C."/>
            <person name="Paixao R.F.C."/>
            <person name="Parente J.A."/>
            <person name="Pedrosa F.O."/>
            <person name="Pena S.D.J."/>
            <person name="Pereira J.O."/>
            <person name="Pereira M."/>
            <person name="Pinto L.S.R.C."/>
            <person name="Pinto L.S."/>
            <person name="Porto J.I.R."/>
            <person name="Potrich D.P."/>
            <person name="Ramalho-Neto C.E."/>
            <person name="Reis A.M.M."/>
            <person name="Rigo L.U."/>
            <person name="Rondinelli E."/>
            <person name="Santos E.B.P."/>
            <person name="Santos F.R."/>
            <person name="Schneider M.P.C."/>
            <person name="Seuanez H.N."/>
            <person name="Silva A.M.R."/>
            <person name="da Silva A.L.C."/>
            <person name="Silva D.W."/>
            <person name="Silva R."/>
            <person name="Simoes I.C."/>
            <person name="Simon D."/>
            <person name="Soares C.M.A."/>
            <person name="Soares R.B.A."/>
            <person name="Souza E.M."/>
            <person name="Souza K.R.L."/>
            <person name="Souza R.C."/>
            <person name="Steffens M.B.R."/>
            <person name="Steindel M."/>
            <person name="Teixeira S.R."/>
            <person name="Urmenyi T."/>
            <person name="Vettore A."/>
            <person name="Wassem R."/>
            <person name="Zaha A."/>
            <person name="Simpson A.J.G."/>
        </authorList>
    </citation>
    <scope>NUCLEOTIDE SEQUENCE [LARGE SCALE GENOMIC DNA]</scope>
    <source>
        <strain>ATCC 12472 / DSM 30191 / JCM 1249 / CCUG 213 / NBRC 12614 / NCIMB 9131 / NCTC 9757 / MK</strain>
    </source>
</reference>
<comment type="function">
    <text evidence="1">Catalyzes the interconversion of 2-phosphoglycerate and 3-phosphoglycerate.</text>
</comment>
<comment type="catalytic activity">
    <reaction evidence="1">
        <text>(2R)-2-phosphoglycerate = (2R)-3-phosphoglycerate</text>
        <dbReference type="Rhea" id="RHEA:15901"/>
        <dbReference type="ChEBI" id="CHEBI:58272"/>
        <dbReference type="ChEBI" id="CHEBI:58289"/>
        <dbReference type="EC" id="5.4.2.12"/>
    </reaction>
</comment>
<comment type="cofactor">
    <cofactor evidence="1">
        <name>Mn(2+)</name>
        <dbReference type="ChEBI" id="CHEBI:29035"/>
    </cofactor>
    <text evidence="1">Binds 2 manganese ions per subunit.</text>
</comment>
<comment type="pathway">
    <text evidence="1">Carbohydrate degradation; glycolysis; pyruvate from D-glyceraldehyde 3-phosphate: step 3/5.</text>
</comment>
<comment type="subunit">
    <text evidence="1">Monomer.</text>
</comment>
<comment type="similarity">
    <text evidence="1">Belongs to the BPG-independent phosphoglycerate mutase family.</text>
</comment>